<keyword id="KW-0479">Metal-binding</keyword>
<keyword id="KW-0560">Oxidoreductase</keyword>
<keyword id="KW-0862">Zinc</keyword>
<dbReference type="EC" id="1.8.4.12" evidence="1"/>
<dbReference type="EMBL" id="CP001138">
    <property type="protein sequence ID" value="ACH52727.1"/>
    <property type="molecule type" value="Genomic_DNA"/>
</dbReference>
<dbReference type="RefSeq" id="WP_001537757.1">
    <property type="nucleotide sequence ID" value="NC_011149.1"/>
</dbReference>
<dbReference type="SMR" id="B5F860"/>
<dbReference type="KEGG" id="sea:SeAg_B1884"/>
<dbReference type="HOGENOM" id="CLU_031040_8_5_6"/>
<dbReference type="Proteomes" id="UP000008819">
    <property type="component" value="Chromosome"/>
</dbReference>
<dbReference type="GO" id="GO:0005737">
    <property type="term" value="C:cytoplasm"/>
    <property type="evidence" value="ECO:0007669"/>
    <property type="project" value="TreeGrafter"/>
</dbReference>
<dbReference type="GO" id="GO:0033743">
    <property type="term" value="F:peptide-methionine (R)-S-oxide reductase activity"/>
    <property type="evidence" value="ECO:0007669"/>
    <property type="project" value="UniProtKB-UniRule"/>
</dbReference>
<dbReference type="GO" id="GO:0008270">
    <property type="term" value="F:zinc ion binding"/>
    <property type="evidence" value="ECO:0007669"/>
    <property type="project" value="UniProtKB-UniRule"/>
</dbReference>
<dbReference type="GO" id="GO:0030091">
    <property type="term" value="P:protein repair"/>
    <property type="evidence" value="ECO:0007669"/>
    <property type="project" value="InterPro"/>
</dbReference>
<dbReference type="GO" id="GO:0006979">
    <property type="term" value="P:response to oxidative stress"/>
    <property type="evidence" value="ECO:0007669"/>
    <property type="project" value="InterPro"/>
</dbReference>
<dbReference type="FunFam" id="2.170.150.20:FF:000001">
    <property type="entry name" value="Peptide methionine sulfoxide reductase MsrB"/>
    <property type="match status" value="1"/>
</dbReference>
<dbReference type="Gene3D" id="2.170.150.20">
    <property type="entry name" value="Peptide methionine sulfoxide reductase"/>
    <property type="match status" value="1"/>
</dbReference>
<dbReference type="HAMAP" id="MF_01400">
    <property type="entry name" value="MsrB"/>
    <property type="match status" value="1"/>
</dbReference>
<dbReference type="InterPro" id="IPR028427">
    <property type="entry name" value="Met_Sox_Rdtase_MsrB"/>
</dbReference>
<dbReference type="InterPro" id="IPR002579">
    <property type="entry name" value="Met_Sox_Rdtase_MsrB_dom"/>
</dbReference>
<dbReference type="InterPro" id="IPR011057">
    <property type="entry name" value="Mss4-like_sf"/>
</dbReference>
<dbReference type="NCBIfam" id="TIGR00357">
    <property type="entry name" value="peptide-methionine (R)-S-oxide reductase MsrB"/>
    <property type="match status" value="1"/>
</dbReference>
<dbReference type="PANTHER" id="PTHR10173">
    <property type="entry name" value="METHIONINE SULFOXIDE REDUCTASE"/>
    <property type="match status" value="1"/>
</dbReference>
<dbReference type="PANTHER" id="PTHR10173:SF52">
    <property type="entry name" value="METHIONINE-R-SULFOXIDE REDUCTASE B1"/>
    <property type="match status" value="1"/>
</dbReference>
<dbReference type="Pfam" id="PF01641">
    <property type="entry name" value="SelR"/>
    <property type="match status" value="1"/>
</dbReference>
<dbReference type="SUPFAM" id="SSF51316">
    <property type="entry name" value="Mss4-like"/>
    <property type="match status" value="1"/>
</dbReference>
<dbReference type="PROSITE" id="PS51790">
    <property type="entry name" value="MSRB"/>
    <property type="match status" value="1"/>
</dbReference>
<sequence length="137" mass="15501">MANQPSAEELKKKLSEMQFYVTQDRGTEPPFTGRLLHNKRDGVYHCLVCDMPLFHSHTKYDSGCGWPSFYQPVSEEAIRYIDDFSHGMQRVEIRCGNCDAHLGHVFPDGPQPTGERYCVNSASLAFSDEKNGDQLKG</sequence>
<evidence type="ECO:0000255" key="1">
    <source>
        <dbReference type="HAMAP-Rule" id="MF_01400"/>
    </source>
</evidence>
<evidence type="ECO:0000255" key="2">
    <source>
        <dbReference type="PROSITE-ProRule" id="PRU01126"/>
    </source>
</evidence>
<name>MSRB_SALA4</name>
<reference key="1">
    <citation type="journal article" date="2011" name="J. Bacteriol.">
        <title>Comparative genomics of 28 Salmonella enterica isolates: evidence for CRISPR-mediated adaptive sublineage evolution.</title>
        <authorList>
            <person name="Fricke W.F."/>
            <person name="Mammel M.K."/>
            <person name="McDermott P.F."/>
            <person name="Tartera C."/>
            <person name="White D.G."/>
            <person name="Leclerc J.E."/>
            <person name="Ravel J."/>
            <person name="Cebula T.A."/>
        </authorList>
    </citation>
    <scope>NUCLEOTIDE SEQUENCE [LARGE SCALE GENOMIC DNA]</scope>
    <source>
        <strain>SL483</strain>
    </source>
</reference>
<comment type="catalytic activity">
    <reaction evidence="1">
        <text>L-methionyl-[protein] + [thioredoxin]-disulfide + H2O = L-methionyl-(R)-S-oxide-[protein] + [thioredoxin]-dithiol</text>
        <dbReference type="Rhea" id="RHEA:24164"/>
        <dbReference type="Rhea" id="RHEA-COMP:10698"/>
        <dbReference type="Rhea" id="RHEA-COMP:10700"/>
        <dbReference type="Rhea" id="RHEA-COMP:12313"/>
        <dbReference type="Rhea" id="RHEA-COMP:12314"/>
        <dbReference type="ChEBI" id="CHEBI:15377"/>
        <dbReference type="ChEBI" id="CHEBI:16044"/>
        <dbReference type="ChEBI" id="CHEBI:29950"/>
        <dbReference type="ChEBI" id="CHEBI:45764"/>
        <dbReference type="ChEBI" id="CHEBI:50058"/>
        <dbReference type="EC" id="1.8.4.12"/>
    </reaction>
</comment>
<comment type="cofactor">
    <cofactor evidence="1">
        <name>Zn(2+)</name>
        <dbReference type="ChEBI" id="CHEBI:29105"/>
    </cofactor>
    <text evidence="1">Binds 1 zinc ion per subunit. The zinc ion is important for the structural integrity of the protein.</text>
</comment>
<comment type="similarity">
    <text evidence="1">Belongs to the MsrB Met sulfoxide reductase family.</text>
</comment>
<accession>B5F860</accession>
<proteinExistence type="inferred from homology"/>
<organism>
    <name type="scientific">Salmonella agona (strain SL483)</name>
    <dbReference type="NCBI Taxonomy" id="454166"/>
    <lineage>
        <taxon>Bacteria</taxon>
        <taxon>Pseudomonadati</taxon>
        <taxon>Pseudomonadota</taxon>
        <taxon>Gammaproteobacteria</taxon>
        <taxon>Enterobacterales</taxon>
        <taxon>Enterobacteriaceae</taxon>
        <taxon>Salmonella</taxon>
    </lineage>
</organism>
<protein>
    <recommendedName>
        <fullName evidence="1">Peptide methionine sulfoxide reductase MsrB</fullName>
        <ecNumber evidence="1">1.8.4.12</ecNumber>
    </recommendedName>
    <alternativeName>
        <fullName evidence="1">Peptide-methionine (R)-S-oxide reductase</fullName>
    </alternativeName>
</protein>
<feature type="chain" id="PRO_1000145379" description="Peptide methionine sulfoxide reductase MsrB">
    <location>
        <begin position="1"/>
        <end position="137"/>
    </location>
</feature>
<feature type="domain" description="MsrB" evidence="2">
    <location>
        <begin position="7"/>
        <end position="129"/>
    </location>
</feature>
<feature type="active site" description="Nucleophile" evidence="2">
    <location>
        <position position="118"/>
    </location>
</feature>
<feature type="binding site" evidence="2">
    <location>
        <position position="46"/>
    </location>
    <ligand>
        <name>Zn(2+)</name>
        <dbReference type="ChEBI" id="CHEBI:29105"/>
    </ligand>
</feature>
<feature type="binding site" evidence="2">
    <location>
        <position position="49"/>
    </location>
    <ligand>
        <name>Zn(2+)</name>
        <dbReference type="ChEBI" id="CHEBI:29105"/>
    </ligand>
</feature>
<feature type="binding site" evidence="2">
    <location>
        <position position="95"/>
    </location>
    <ligand>
        <name>Zn(2+)</name>
        <dbReference type="ChEBI" id="CHEBI:29105"/>
    </ligand>
</feature>
<feature type="binding site" evidence="2">
    <location>
        <position position="98"/>
    </location>
    <ligand>
        <name>Zn(2+)</name>
        <dbReference type="ChEBI" id="CHEBI:29105"/>
    </ligand>
</feature>
<gene>
    <name evidence="1" type="primary">msrB</name>
    <name type="ordered locus">SeAg_B1884</name>
</gene>